<feature type="chain" id="PRO_1000186059" description="Fatty acid oxidation complex subunit alpha">
    <location>
        <begin position="1"/>
        <end position="723"/>
    </location>
</feature>
<feature type="region of interest" description="Enoyl-CoA hydratase/isomerase" evidence="1">
    <location>
        <begin position="1"/>
        <end position="189"/>
    </location>
</feature>
<feature type="region of interest" description="3-hydroxyacyl-CoA dehydrogenase" evidence="1">
    <location>
        <begin position="311"/>
        <end position="723"/>
    </location>
</feature>
<feature type="active site" description="For 3-hydroxyacyl-CoA dehydrogenase activity" evidence="1">
    <location>
        <position position="451"/>
    </location>
</feature>
<feature type="binding site" evidence="1">
    <location>
        <position position="296"/>
    </location>
    <ligand>
        <name>substrate</name>
    </ligand>
</feature>
<feature type="binding site" evidence="1">
    <location>
        <position position="325"/>
    </location>
    <ligand>
        <name>NAD(+)</name>
        <dbReference type="ChEBI" id="CHEBI:57540"/>
    </ligand>
</feature>
<feature type="binding site" evidence="1">
    <location>
        <position position="344"/>
    </location>
    <ligand>
        <name>NAD(+)</name>
        <dbReference type="ChEBI" id="CHEBI:57540"/>
    </ligand>
</feature>
<feature type="binding site" evidence="1">
    <location>
        <begin position="401"/>
        <end position="403"/>
    </location>
    <ligand>
        <name>NAD(+)</name>
        <dbReference type="ChEBI" id="CHEBI:57540"/>
    </ligand>
</feature>
<feature type="binding site" evidence="1">
    <location>
        <position position="408"/>
    </location>
    <ligand>
        <name>NAD(+)</name>
        <dbReference type="ChEBI" id="CHEBI:57540"/>
    </ligand>
</feature>
<feature type="binding site" evidence="1">
    <location>
        <position position="430"/>
    </location>
    <ligand>
        <name>NAD(+)</name>
        <dbReference type="ChEBI" id="CHEBI:57540"/>
    </ligand>
</feature>
<feature type="binding site" evidence="1">
    <location>
        <position position="454"/>
    </location>
    <ligand>
        <name>NAD(+)</name>
        <dbReference type="ChEBI" id="CHEBI:57540"/>
    </ligand>
</feature>
<feature type="binding site" evidence="1">
    <location>
        <position position="501"/>
    </location>
    <ligand>
        <name>substrate</name>
    </ligand>
</feature>
<feature type="binding site" evidence="1">
    <location>
        <position position="661"/>
    </location>
    <ligand>
        <name>substrate</name>
    </ligand>
</feature>
<feature type="site" description="Important for catalytic activity" evidence="1">
    <location>
        <position position="119"/>
    </location>
</feature>
<feature type="site" description="Important for catalytic activity" evidence="1">
    <location>
        <position position="139"/>
    </location>
</feature>
<accession>B7VGL4</accession>
<reference key="1">
    <citation type="submission" date="2009-02" db="EMBL/GenBank/DDBJ databases">
        <title>Vibrio splendidus str. LGP32 complete genome.</title>
        <authorList>
            <person name="Mazel D."/>
            <person name="Le Roux F."/>
        </authorList>
    </citation>
    <scope>NUCLEOTIDE SEQUENCE [LARGE SCALE GENOMIC DNA]</scope>
    <source>
        <strain>LGP32</strain>
    </source>
</reference>
<organism>
    <name type="scientific">Vibrio atlanticus (strain LGP32)</name>
    <name type="common">Vibrio splendidus (strain Mel32)</name>
    <dbReference type="NCBI Taxonomy" id="575788"/>
    <lineage>
        <taxon>Bacteria</taxon>
        <taxon>Pseudomonadati</taxon>
        <taxon>Pseudomonadota</taxon>
        <taxon>Gammaproteobacteria</taxon>
        <taxon>Vibrionales</taxon>
        <taxon>Vibrionaceae</taxon>
        <taxon>Vibrio</taxon>
    </lineage>
</organism>
<name>FADB_VIBA3</name>
<sequence>MIYQANTLQVKELQDGIAELSFCAPASVNKLDLATLESLDKALDALNAHAGLRGLILTSNKDAFIVGADITEFLGLFAKPEAELDEWLRFANSIFSKLEDLPVPTLSMMRGHALGGGCECVLATDFRIGDKTTSIGLPETKLGIMPGFGGCVRLPRVIGADSAMEIITQGKACRADEALKVGLLDAIVETDQLLESAINTVSLAANEKLDWQLRRKQKTSALSLSKLEAMMSFTMAKGLVAQKAGPHYPAPITSVIAIEEAARSDRDAALDIERKHFVKLAKSEEAKALVGLFLNDQYIKGLAKHAGKSANKATERAAVLGAGIMGGGIAYQSALKGVPVMMKDIAQASLELGMNEASKLLNKRLSRGRLDGFKMAGILSSITPSLHYAGVEQSDVIVEAVVENPKVKAAVLSEVEGLVGEDTVLTSNTSTIPINLLAKSLKRPENFCGMHFFNPVHRMPLVEIIRGEHTSEETINRVVAYAAKMGKSPIVVNDCPGFFVNRVLFPYFGGFSMLLRDGADFTKIDKVMERKFGWPMGPAYLLDVVGLDTAHHAQAVMAQGFPERMGKEGRDAIDALYVAEKYGQKNGSGFYTYSVDKRGRPKKTFSEDILPILADVCQQPQDFDDQTIIQRVMIPMINEVVLCLEEGIIATPQEADMALVYGLGFPPFRGGVFRYLDSVGIGNFVEMAKSYQDLGAMYQVPQLLLDMAAKGESFYDGQQASSL</sequence>
<comment type="function">
    <text evidence="1">Involved in the aerobic and anaerobic degradation of long-chain fatty acids via beta-oxidation cycle. Catalyzes the formation of 3-oxoacyl-CoA from enoyl-CoA via L-3-hydroxyacyl-CoA. It can also use D-3-hydroxyacyl-CoA and cis-3-enoyl-CoA as substrate.</text>
</comment>
<comment type="catalytic activity">
    <reaction evidence="1">
        <text>a (3S)-3-hydroxyacyl-CoA + NAD(+) = a 3-oxoacyl-CoA + NADH + H(+)</text>
        <dbReference type="Rhea" id="RHEA:22432"/>
        <dbReference type="ChEBI" id="CHEBI:15378"/>
        <dbReference type="ChEBI" id="CHEBI:57318"/>
        <dbReference type="ChEBI" id="CHEBI:57540"/>
        <dbReference type="ChEBI" id="CHEBI:57945"/>
        <dbReference type="ChEBI" id="CHEBI:90726"/>
        <dbReference type="EC" id="1.1.1.35"/>
    </reaction>
</comment>
<comment type="catalytic activity">
    <reaction evidence="1">
        <text>a (3S)-3-hydroxyacyl-CoA = a (2E)-enoyl-CoA + H2O</text>
        <dbReference type="Rhea" id="RHEA:16105"/>
        <dbReference type="ChEBI" id="CHEBI:15377"/>
        <dbReference type="ChEBI" id="CHEBI:57318"/>
        <dbReference type="ChEBI" id="CHEBI:58856"/>
        <dbReference type="EC" id="4.2.1.17"/>
    </reaction>
</comment>
<comment type="catalytic activity">
    <reaction evidence="1">
        <text>a 4-saturated-(3S)-3-hydroxyacyl-CoA = a (3E)-enoyl-CoA + H2O</text>
        <dbReference type="Rhea" id="RHEA:20724"/>
        <dbReference type="ChEBI" id="CHEBI:15377"/>
        <dbReference type="ChEBI" id="CHEBI:58521"/>
        <dbReference type="ChEBI" id="CHEBI:137480"/>
        <dbReference type="EC" id="4.2.1.17"/>
    </reaction>
</comment>
<comment type="catalytic activity">
    <reaction evidence="1">
        <text>(3S)-3-hydroxybutanoyl-CoA = (3R)-3-hydroxybutanoyl-CoA</text>
        <dbReference type="Rhea" id="RHEA:21760"/>
        <dbReference type="ChEBI" id="CHEBI:57315"/>
        <dbReference type="ChEBI" id="CHEBI:57316"/>
        <dbReference type="EC" id="5.1.2.3"/>
    </reaction>
</comment>
<comment type="catalytic activity">
    <reaction evidence="1">
        <text>a (3Z)-enoyl-CoA = a 4-saturated (2E)-enoyl-CoA</text>
        <dbReference type="Rhea" id="RHEA:45900"/>
        <dbReference type="ChEBI" id="CHEBI:85097"/>
        <dbReference type="ChEBI" id="CHEBI:85489"/>
        <dbReference type="EC" id="5.3.3.8"/>
    </reaction>
</comment>
<comment type="catalytic activity">
    <reaction evidence="1">
        <text>a (3E)-enoyl-CoA = a 4-saturated (2E)-enoyl-CoA</text>
        <dbReference type="Rhea" id="RHEA:45228"/>
        <dbReference type="ChEBI" id="CHEBI:58521"/>
        <dbReference type="ChEBI" id="CHEBI:85097"/>
        <dbReference type="EC" id="5.3.3.8"/>
    </reaction>
</comment>
<comment type="pathway">
    <text evidence="1">Lipid metabolism; fatty acid beta-oxidation.</text>
</comment>
<comment type="subunit">
    <text evidence="1">Heterotetramer of two alpha chains (FadB) and two beta chains (FadA).</text>
</comment>
<comment type="similarity">
    <text evidence="1">In the N-terminal section; belongs to the enoyl-CoA hydratase/isomerase family.</text>
</comment>
<comment type="similarity">
    <text evidence="1">In the C-terminal section; belongs to the 3-hydroxyacyl-CoA dehydrogenase family.</text>
</comment>
<gene>
    <name evidence="1" type="primary">fadB</name>
    <name type="ordered locus">VS_0041</name>
</gene>
<keyword id="KW-0276">Fatty acid metabolism</keyword>
<keyword id="KW-0413">Isomerase</keyword>
<keyword id="KW-0442">Lipid degradation</keyword>
<keyword id="KW-0443">Lipid metabolism</keyword>
<keyword id="KW-0456">Lyase</keyword>
<keyword id="KW-0511">Multifunctional enzyme</keyword>
<keyword id="KW-0520">NAD</keyword>
<keyword id="KW-0560">Oxidoreductase</keyword>
<dbReference type="EC" id="4.2.1.17" evidence="1"/>
<dbReference type="EC" id="5.1.2.3" evidence="1"/>
<dbReference type="EC" id="5.3.3.8" evidence="1"/>
<dbReference type="EC" id="1.1.1.35" evidence="1"/>
<dbReference type="EMBL" id="FM954972">
    <property type="protein sequence ID" value="CAV17097.1"/>
    <property type="molecule type" value="Genomic_DNA"/>
</dbReference>
<dbReference type="SMR" id="B7VGL4"/>
<dbReference type="STRING" id="575788.VS_0041"/>
<dbReference type="KEGG" id="vsp:VS_0041"/>
<dbReference type="PATRIC" id="fig|575788.5.peg.1455"/>
<dbReference type="eggNOG" id="COG1024">
    <property type="taxonomic scope" value="Bacteria"/>
</dbReference>
<dbReference type="eggNOG" id="COG1250">
    <property type="taxonomic scope" value="Bacteria"/>
</dbReference>
<dbReference type="HOGENOM" id="CLU_009834_16_3_6"/>
<dbReference type="UniPathway" id="UPA00659"/>
<dbReference type="Proteomes" id="UP000009100">
    <property type="component" value="Chromosome 1"/>
</dbReference>
<dbReference type="GO" id="GO:0036125">
    <property type="term" value="C:fatty acid beta-oxidation multienzyme complex"/>
    <property type="evidence" value="ECO:0007669"/>
    <property type="project" value="InterPro"/>
</dbReference>
<dbReference type="GO" id="GO:0008692">
    <property type="term" value="F:3-hydroxybutyryl-CoA epimerase activity"/>
    <property type="evidence" value="ECO:0007669"/>
    <property type="project" value="UniProtKB-UniRule"/>
</dbReference>
<dbReference type="GO" id="GO:0004165">
    <property type="term" value="F:delta(3)-delta(2)-enoyl-CoA isomerase activity"/>
    <property type="evidence" value="ECO:0007669"/>
    <property type="project" value="UniProtKB-UniRule"/>
</dbReference>
<dbReference type="GO" id="GO:0004300">
    <property type="term" value="F:enoyl-CoA hydratase activity"/>
    <property type="evidence" value="ECO:0007669"/>
    <property type="project" value="UniProtKB-UniRule"/>
</dbReference>
<dbReference type="GO" id="GO:0016509">
    <property type="term" value="F:long-chain-3-hydroxyacyl-CoA dehydrogenase activity"/>
    <property type="evidence" value="ECO:0007669"/>
    <property type="project" value="TreeGrafter"/>
</dbReference>
<dbReference type="GO" id="GO:0070403">
    <property type="term" value="F:NAD+ binding"/>
    <property type="evidence" value="ECO:0007669"/>
    <property type="project" value="InterPro"/>
</dbReference>
<dbReference type="GO" id="GO:0006635">
    <property type="term" value="P:fatty acid beta-oxidation"/>
    <property type="evidence" value="ECO:0007669"/>
    <property type="project" value="UniProtKB-UniRule"/>
</dbReference>
<dbReference type="CDD" id="cd06558">
    <property type="entry name" value="crotonase-like"/>
    <property type="match status" value="1"/>
</dbReference>
<dbReference type="FunFam" id="3.40.50.720:FF:000009">
    <property type="entry name" value="Fatty oxidation complex, alpha subunit"/>
    <property type="match status" value="1"/>
</dbReference>
<dbReference type="Gene3D" id="1.10.1040.50">
    <property type="match status" value="1"/>
</dbReference>
<dbReference type="Gene3D" id="3.90.226.10">
    <property type="entry name" value="2-enoyl-CoA Hydratase, Chain A, domain 1"/>
    <property type="match status" value="1"/>
</dbReference>
<dbReference type="Gene3D" id="3.40.50.720">
    <property type="entry name" value="NAD(P)-binding Rossmann-like Domain"/>
    <property type="match status" value="1"/>
</dbReference>
<dbReference type="HAMAP" id="MF_01621">
    <property type="entry name" value="FadB"/>
    <property type="match status" value="1"/>
</dbReference>
<dbReference type="InterPro" id="IPR006180">
    <property type="entry name" value="3-OHacyl-CoA_DH_CS"/>
</dbReference>
<dbReference type="InterPro" id="IPR006176">
    <property type="entry name" value="3-OHacyl-CoA_DH_NAD-bd"/>
</dbReference>
<dbReference type="InterPro" id="IPR006108">
    <property type="entry name" value="3HC_DH_C"/>
</dbReference>
<dbReference type="InterPro" id="IPR008927">
    <property type="entry name" value="6-PGluconate_DH-like_C_sf"/>
</dbReference>
<dbReference type="InterPro" id="IPR029045">
    <property type="entry name" value="ClpP/crotonase-like_dom_sf"/>
</dbReference>
<dbReference type="InterPro" id="IPR018376">
    <property type="entry name" value="Enoyl-CoA_hyd/isom_CS"/>
</dbReference>
<dbReference type="InterPro" id="IPR001753">
    <property type="entry name" value="Enoyl-CoA_hydra/iso"/>
</dbReference>
<dbReference type="InterPro" id="IPR050136">
    <property type="entry name" value="FA_oxidation_alpha_subunit"/>
</dbReference>
<dbReference type="InterPro" id="IPR012799">
    <property type="entry name" value="FadB"/>
</dbReference>
<dbReference type="InterPro" id="IPR036291">
    <property type="entry name" value="NAD(P)-bd_dom_sf"/>
</dbReference>
<dbReference type="NCBIfam" id="TIGR02437">
    <property type="entry name" value="FadB"/>
    <property type="match status" value="1"/>
</dbReference>
<dbReference type="NCBIfam" id="NF008727">
    <property type="entry name" value="PRK11730.1"/>
    <property type="match status" value="1"/>
</dbReference>
<dbReference type="PANTHER" id="PTHR43612">
    <property type="entry name" value="TRIFUNCTIONAL ENZYME SUBUNIT ALPHA"/>
    <property type="match status" value="1"/>
</dbReference>
<dbReference type="PANTHER" id="PTHR43612:SF3">
    <property type="entry name" value="TRIFUNCTIONAL ENZYME SUBUNIT ALPHA, MITOCHONDRIAL"/>
    <property type="match status" value="1"/>
</dbReference>
<dbReference type="Pfam" id="PF00725">
    <property type="entry name" value="3HCDH"/>
    <property type="match status" value="2"/>
</dbReference>
<dbReference type="Pfam" id="PF02737">
    <property type="entry name" value="3HCDH_N"/>
    <property type="match status" value="1"/>
</dbReference>
<dbReference type="Pfam" id="PF00378">
    <property type="entry name" value="ECH_1"/>
    <property type="match status" value="1"/>
</dbReference>
<dbReference type="SUPFAM" id="SSF48179">
    <property type="entry name" value="6-phosphogluconate dehydrogenase C-terminal domain-like"/>
    <property type="match status" value="2"/>
</dbReference>
<dbReference type="SUPFAM" id="SSF52096">
    <property type="entry name" value="ClpP/crotonase"/>
    <property type="match status" value="1"/>
</dbReference>
<dbReference type="SUPFAM" id="SSF51735">
    <property type="entry name" value="NAD(P)-binding Rossmann-fold domains"/>
    <property type="match status" value="1"/>
</dbReference>
<dbReference type="PROSITE" id="PS00067">
    <property type="entry name" value="3HCDH"/>
    <property type="match status" value="1"/>
</dbReference>
<dbReference type="PROSITE" id="PS00166">
    <property type="entry name" value="ENOYL_COA_HYDRATASE"/>
    <property type="match status" value="1"/>
</dbReference>
<protein>
    <recommendedName>
        <fullName evidence="1">Fatty acid oxidation complex subunit alpha</fullName>
    </recommendedName>
    <domain>
        <recommendedName>
            <fullName evidence="1">Enoyl-CoA hydratase/Delta(3)-cis-Delta(2)-trans-enoyl-CoA isomerase/3-hydroxybutyryl-CoA epimerase</fullName>
            <ecNumber evidence="1">4.2.1.17</ecNumber>
            <ecNumber evidence="1">5.1.2.3</ecNumber>
            <ecNumber evidence="1">5.3.3.8</ecNumber>
        </recommendedName>
    </domain>
    <domain>
        <recommendedName>
            <fullName evidence="1">3-hydroxyacyl-CoA dehydrogenase</fullName>
            <ecNumber evidence="1">1.1.1.35</ecNumber>
        </recommendedName>
    </domain>
</protein>
<evidence type="ECO:0000255" key="1">
    <source>
        <dbReference type="HAMAP-Rule" id="MF_01621"/>
    </source>
</evidence>
<proteinExistence type="inferred from homology"/>